<organism>
    <name type="scientific">Bacillus cereus (strain ATCC 10987 / NRS 248)</name>
    <dbReference type="NCBI Taxonomy" id="222523"/>
    <lineage>
        <taxon>Bacteria</taxon>
        <taxon>Bacillati</taxon>
        <taxon>Bacillota</taxon>
        <taxon>Bacilli</taxon>
        <taxon>Bacillales</taxon>
        <taxon>Bacillaceae</taxon>
        <taxon>Bacillus</taxon>
        <taxon>Bacillus cereus group</taxon>
    </lineage>
</organism>
<evidence type="ECO:0000255" key="1">
    <source>
        <dbReference type="HAMAP-Rule" id="MF_00083"/>
    </source>
</evidence>
<evidence type="ECO:0000305" key="2"/>
<reference key="1">
    <citation type="journal article" date="2004" name="Nucleic Acids Res.">
        <title>The genome sequence of Bacillus cereus ATCC 10987 reveals metabolic adaptations and a large plasmid related to Bacillus anthracis pXO1.</title>
        <authorList>
            <person name="Rasko D.A."/>
            <person name="Ravel J."/>
            <person name="Oekstad O.A."/>
            <person name="Helgason E."/>
            <person name="Cer R.Z."/>
            <person name="Jiang L."/>
            <person name="Shores K.A."/>
            <person name="Fouts D.E."/>
            <person name="Tourasse N.J."/>
            <person name="Angiuoli S.V."/>
            <person name="Kolonay J.F."/>
            <person name="Nelson W.C."/>
            <person name="Kolstoe A.-B."/>
            <person name="Fraser C.M."/>
            <person name="Read T.D."/>
        </authorList>
    </citation>
    <scope>NUCLEOTIDE SEQUENCE [LARGE SCALE GENOMIC DNA]</scope>
    <source>
        <strain>ATCC 10987 / NRS 248</strain>
    </source>
</reference>
<dbReference type="EC" id="3.1.1.29" evidence="1"/>
<dbReference type="EMBL" id="AE017194">
    <property type="protein sequence ID" value="AAS38985.1"/>
    <property type="status" value="ALT_INIT"/>
    <property type="molecule type" value="Genomic_DNA"/>
</dbReference>
<dbReference type="SMR" id="Q73FF7"/>
<dbReference type="KEGG" id="bca:BCE_0049"/>
<dbReference type="HOGENOM" id="CLU_062456_4_1_9"/>
<dbReference type="Proteomes" id="UP000002527">
    <property type="component" value="Chromosome"/>
</dbReference>
<dbReference type="GO" id="GO:0005737">
    <property type="term" value="C:cytoplasm"/>
    <property type="evidence" value="ECO:0007669"/>
    <property type="project" value="UniProtKB-SubCell"/>
</dbReference>
<dbReference type="GO" id="GO:0004045">
    <property type="term" value="F:peptidyl-tRNA hydrolase activity"/>
    <property type="evidence" value="ECO:0007669"/>
    <property type="project" value="UniProtKB-UniRule"/>
</dbReference>
<dbReference type="GO" id="GO:0000049">
    <property type="term" value="F:tRNA binding"/>
    <property type="evidence" value="ECO:0007669"/>
    <property type="project" value="UniProtKB-UniRule"/>
</dbReference>
<dbReference type="GO" id="GO:0006515">
    <property type="term" value="P:protein quality control for misfolded or incompletely synthesized proteins"/>
    <property type="evidence" value="ECO:0007669"/>
    <property type="project" value="UniProtKB-UniRule"/>
</dbReference>
<dbReference type="GO" id="GO:0072344">
    <property type="term" value="P:rescue of stalled ribosome"/>
    <property type="evidence" value="ECO:0007669"/>
    <property type="project" value="UniProtKB-UniRule"/>
</dbReference>
<dbReference type="CDD" id="cd00462">
    <property type="entry name" value="PTH"/>
    <property type="match status" value="1"/>
</dbReference>
<dbReference type="FunFam" id="3.40.50.1470:FF:000001">
    <property type="entry name" value="Peptidyl-tRNA hydrolase"/>
    <property type="match status" value="1"/>
</dbReference>
<dbReference type="Gene3D" id="3.40.50.1470">
    <property type="entry name" value="Peptidyl-tRNA hydrolase"/>
    <property type="match status" value="1"/>
</dbReference>
<dbReference type="HAMAP" id="MF_00083">
    <property type="entry name" value="Pept_tRNA_hydro_bact"/>
    <property type="match status" value="1"/>
</dbReference>
<dbReference type="InterPro" id="IPR001328">
    <property type="entry name" value="Pept_tRNA_hydro"/>
</dbReference>
<dbReference type="InterPro" id="IPR018171">
    <property type="entry name" value="Pept_tRNA_hydro_CS"/>
</dbReference>
<dbReference type="InterPro" id="IPR036416">
    <property type="entry name" value="Pept_tRNA_hydro_sf"/>
</dbReference>
<dbReference type="NCBIfam" id="TIGR00447">
    <property type="entry name" value="pth"/>
    <property type="match status" value="1"/>
</dbReference>
<dbReference type="PANTHER" id="PTHR17224">
    <property type="entry name" value="PEPTIDYL-TRNA HYDROLASE"/>
    <property type="match status" value="1"/>
</dbReference>
<dbReference type="PANTHER" id="PTHR17224:SF1">
    <property type="entry name" value="PEPTIDYL-TRNA HYDROLASE"/>
    <property type="match status" value="1"/>
</dbReference>
<dbReference type="Pfam" id="PF01195">
    <property type="entry name" value="Pept_tRNA_hydro"/>
    <property type="match status" value="1"/>
</dbReference>
<dbReference type="SUPFAM" id="SSF53178">
    <property type="entry name" value="Peptidyl-tRNA hydrolase-like"/>
    <property type="match status" value="1"/>
</dbReference>
<dbReference type="PROSITE" id="PS01195">
    <property type="entry name" value="PEPT_TRNA_HYDROL_1"/>
    <property type="match status" value="1"/>
</dbReference>
<dbReference type="PROSITE" id="PS01196">
    <property type="entry name" value="PEPT_TRNA_HYDROL_2"/>
    <property type="match status" value="1"/>
</dbReference>
<gene>
    <name evidence="1" type="primary">pth</name>
    <name type="synonym">spoVC</name>
    <name type="ordered locus">BCE_0049</name>
</gene>
<name>PTH_BACC1</name>
<sequence length="186" mass="21024">MKLIVGLGNPGREYELTRHNIGFMAIDELAKRWNISLNEQKFKGVFGAGFVNGEKVILLKPLTYMNLSGESIRPLMDYYKIDVEDFVVLYDDLDIPVGKLRLRMKGSAGGHNGVKSTISHLGTQEFQRIRMGIDRPKNGMKVVDYVLGRFTSEEIPGVNHSIEKAADACEEWLNKPFLQIMNTFNS</sequence>
<accession>Q73FF7</accession>
<keyword id="KW-0963">Cytoplasm</keyword>
<keyword id="KW-0378">Hydrolase</keyword>
<keyword id="KW-0694">RNA-binding</keyword>
<keyword id="KW-0820">tRNA-binding</keyword>
<proteinExistence type="inferred from homology"/>
<feature type="chain" id="PRO_0000187684" description="Peptidyl-tRNA hydrolase">
    <location>
        <begin position="1"/>
        <end position="186"/>
    </location>
</feature>
<feature type="active site" description="Proton acceptor" evidence="1">
    <location>
        <position position="19"/>
    </location>
</feature>
<feature type="binding site" evidence="1">
    <location>
        <position position="14"/>
    </location>
    <ligand>
        <name>tRNA</name>
        <dbReference type="ChEBI" id="CHEBI:17843"/>
    </ligand>
</feature>
<feature type="binding site" evidence="1">
    <location>
        <position position="64"/>
    </location>
    <ligand>
        <name>tRNA</name>
        <dbReference type="ChEBI" id="CHEBI:17843"/>
    </ligand>
</feature>
<feature type="binding site" evidence="1">
    <location>
        <position position="66"/>
    </location>
    <ligand>
        <name>tRNA</name>
        <dbReference type="ChEBI" id="CHEBI:17843"/>
    </ligand>
</feature>
<feature type="binding site" evidence="1">
    <location>
        <position position="112"/>
    </location>
    <ligand>
        <name>tRNA</name>
        <dbReference type="ChEBI" id="CHEBI:17843"/>
    </ligand>
</feature>
<feature type="site" description="Discriminates between blocked and unblocked aminoacyl-tRNA" evidence="1">
    <location>
        <position position="9"/>
    </location>
</feature>
<feature type="site" description="Stabilizes the basic form of H active site to accept a proton" evidence="1">
    <location>
        <position position="91"/>
    </location>
</feature>
<protein>
    <recommendedName>
        <fullName evidence="1">Peptidyl-tRNA hydrolase</fullName>
        <shortName evidence="1">Pth</shortName>
        <ecNumber evidence="1">3.1.1.29</ecNumber>
    </recommendedName>
</protein>
<comment type="function">
    <text evidence="1">Hydrolyzes ribosome-free peptidyl-tRNAs (with 1 or more amino acids incorporated), which drop off the ribosome during protein synthesis, or as a result of ribosome stalling.</text>
</comment>
<comment type="function">
    <text evidence="1">Catalyzes the release of premature peptidyl moieties from peptidyl-tRNA molecules trapped in stalled 50S ribosomal subunits, and thus maintains levels of free tRNAs and 50S ribosomes.</text>
</comment>
<comment type="catalytic activity">
    <reaction evidence="1">
        <text>an N-acyl-L-alpha-aminoacyl-tRNA + H2O = an N-acyl-L-amino acid + a tRNA + H(+)</text>
        <dbReference type="Rhea" id="RHEA:54448"/>
        <dbReference type="Rhea" id="RHEA-COMP:10123"/>
        <dbReference type="Rhea" id="RHEA-COMP:13883"/>
        <dbReference type="ChEBI" id="CHEBI:15377"/>
        <dbReference type="ChEBI" id="CHEBI:15378"/>
        <dbReference type="ChEBI" id="CHEBI:59874"/>
        <dbReference type="ChEBI" id="CHEBI:78442"/>
        <dbReference type="ChEBI" id="CHEBI:138191"/>
        <dbReference type="EC" id="3.1.1.29"/>
    </reaction>
</comment>
<comment type="subunit">
    <text evidence="1">Monomer.</text>
</comment>
<comment type="subcellular location">
    <subcellularLocation>
        <location evidence="1">Cytoplasm</location>
    </subcellularLocation>
</comment>
<comment type="similarity">
    <text evidence="1">Belongs to the PTH family.</text>
</comment>
<comment type="sequence caution" evidence="2">
    <conflict type="erroneous initiation">
        <sequence resource="EMBL-CDS" id="AAS38985"/>
    </conflict>
    <text>Extended N-terminus.</text>
</comment>